<evidence type="ECO:0000255" key="1">
    <source>
        <dbReference type="HAMAP-Rule" id="MF_00473"/>
    </source>
</evidence>
<accession>Q165T7</accession>
<keyword id="KW-0963">Cytoplasm</keyword>
<keyword id="KW-0312">Gluconeogenesis</keyword>
<keyword id="KW-0324">Glycolysis</keyword>
<keyword id="KW-0413">Isomerase</keyword>
<keyword id="KW-1185">Reference proteome</keyword>
<reference key="1">
    <citation type="journal article" date="2007" name="J. Bacteriol.">
        <title>The complete genome sequence of Roseobacter denitrificans reveals a mixotrophic rather than photosynthetic metabolism.</title>
        <authorList>
            <person name="Swingley W.D."/>
            <person name="Sadekar S."/>
            <person name="Mastrian S.D."/>
            <person name="Matthies H.J."/>
            <person name="Hao J."/>
            <person name="Ramos H."/>
            <person name="Acharya C.R."/>
            <person name="Conrad A.L."/>
            <person name="Taylor H.L."/>
            <person name="Dejesa L.C."/>
            <person name="Shah M.K."/>
            <person name="O'Huallachain M.E."/>
            <person name="Lince M.T."/>
            <person name="Blankenship R.E."/>
            <person name="Beatty J.T."/>
            <person name="Touchman J.W."/>
        </authorList>
    </citation>
    <scope>NUCLEOTIDE SEQUENCE [LARGE SCALE GENOMIC DNA]</scope>
    <source>
        <strain>ATCC 33942 / OCh 114</strain>
    </source>
</reference>
<proteinExistence type="inferred from homology"/>
<feature type="chain" id="PRO_0000252642" description="Glucose-6-phosphate isomerase">
    <location>
        <begin position="1"/>
        <end position="530"/>
    </location>
</feature>
<feature type="active site" description="Proton donor" evidence="1">
    <location>
        <position position="335"/>
    </location>
</feature>
<feature type="active site" evidence="1">
    <location>
        <position position="366"/>
    </location>
</feature>
<feature type="active site" evidence="1">
    <location>
        <position position="495"/>
    </location>
</feature>
<comment type="function">
    <text evidence="1">Catalyzes the reversible isomerization of glucose-6-phosphate to fructose-6-phosphate.</text>
</comment>
<comment type="catalytic activity">
    <reaction evidence="1">
        <text>alpha-D-glucose 6-phosphate = beta-D-fructose 6-phosphate</text>
        <dbReference type="Rhea" id="RHEA:11816"/>
        <dbReference type="ChEBI" id="CHEBI:57634"/>
        <dbReference type="ChEBI" id="CHEBI:58225"/>
        <dbReference type="EC" id="5.3.1.9"/>
    </reaction>
</comment>
<comment type="pathway">
    <text evidence="1">Carbohydrate biosynthesis; gluconeogenesis.</text>
</comment>
<comment type="pathway">
    <text evidence="1">Carbohydrate degradation; glycolysis; D-glyceraldehyde 3-phosphate and glycerone phosphate from D-glucose: step 2/4.</text>
</comment>
<comment type="subcellular location">
    <subcellularLocation>
        <location evidence="1">Cytoplasm</location>
    </subcellularLocation>
</comment>
<comment type="similarity">
    <text evidence="1">Belongs to the GPI family.</text>
</comment>
<gene>
    <name evidence="1" type="primary">pgi</name>
    <name type="ordered locus">RD1_2720</name>
</gene>
<protein>
    <recommendedName>
        <fullName evidence="1">Glucose-6-phosphate isomerase</fullName>
        <shortName evidence="1">GPI</shortName>
        <ecNumber evidence="1">5.3.1.9</ecNumber>
    </recommendedName>
    <alternativeName>
        <fullName evidence="1">Phosphoglucose isomerase</fullName>
        <shortName evidence="1">PGI</shortName>
    </alternativeName>
    <alternativeName>
        <fullName evidence="1">Phosphohexose isomerase</fullName>
        <shortName evidence="1">PHI</shortName>
    </alternativeName>
</protein>
<sequence length="530" mass="57177">MMSIWDALREKQAQVSDRSILSLFDDPGRAQEYSAKTGDLFFDFSKTNIDDEALNLLSGLLDASGMAQKRTAMFSGQPINDTEGRAVLHTALRNLDGGPVLVNGTDVMPGVLATLERMRVFAQGVRDSDVTDVVNIGIGGSDLGPAMAVAALSPYHDGPRCHFVSNVDGAHIADTLRGLDAKKTLVIVASKTFTTIETMTNARTARAWMTEHGGDPKAQFAALSTADDLTAAFGIPPERVFGFEDWVGGRYSVWGPIGLSLMIAIGPRAFDAFLRGGQAMDRHFQAADWRENLPVLLALVGVWHAQVCGCSSRAVLPYDQRLAKLPDYLQQLEMESNGKSVQIGGADVTVDSGPIVWGAAGTNGQHAFYQLIHQGTRVVPCEFLVAAEGHEPELAHHHNLLVANCLAQSEALMRGRSIEDARAKMVQAGFTGQELERQARHRVFAGNRPSVTLAYPKLDPFMLGQIIALYEHRVFVEGVILGINSYDQWGVELGKELATSLQPIVDGEAPADGKDGSTAQLVGYVIANRG</sequence>
<dbReference type="EC" id="5.3.1.9" evidence="1"/>
<dbReference type="EMBL" id="CP000362">
    <property type="protein sequence ID" value="ABG32256.1"/>
    <property type="molecule type" value="Genomic_DNA"/>
</dbReference>
<dbReference type="RefSeq" id="WP_011568873.1">
    <property type="nucleotide sequence ID" value="NC_008209.1"/>
</dbReference>
<dbReference type="SMR" id="Q165T7"/>
<dbReference type="STRING" id="375451.RD1_2720"/>
<dbReference type="KEGG" id="rde:RD1_2720"/>
<dbReference type="eggNOG" id="COG0166">
    <property type="taxonomic scope" value="Bacteria"/>
</dbReference>
<dbReference type="HOGENOM" id="CLU_017947_3_1_5"/>
<dbReference type="UniPathway" id="UPA00109">
    <property type="reaction ID" value="UER00181"/>
</dbReference>
<dbReference type="UniPathway" id="UPA00138"/>
<dbReference type="Proteomes" id="UP000007029">
    <property type="component" value="Chromosome"/>
</dbReference>
<dbReference type="GO" id="GO:0005829">
    <property type="term" value="C:cytosol"/>
    <property type="evidence" value="ECO:0007669"/>
    <property type="project" value="TreeGrafter"/>
</dbReference>
<dbReference type="GO" id="GO:0097367">
    <property type="term" value="F:carbohydrate derivative binding"/>
    <property type="evidence" value="ECO:0007669"/>
    <property type="project" value="InterPro"/>
</dbReference>
<dbReference type="GO" id="GO:0004347">
    <property type="term" value="F:glucose-6-phosphate isomerase activity"/>
    <property type="evidence" value="ECO:0007669"/>
    <property type="project" value="UniProtKB-UniRule"/>
</dbReference>
<dbReference type="GO" id="GO:0048029">
    <property type="term" value="F:monosaccharide binding"/>
    <property type="evidence" value="ECO:0007669"/>
    <property type="project" value="TreeGrafter"/>
</dbReference>
<dbReference type="GO" id="GO:0006094">
    <property type="term" value="P:gluconeogenesis"/>
    <property type="evidence" value="ECO:0007669"/>
    <property type="project" value="UniProtKB-UniRule"/>
</dbReference>
<dbReference type="GO" id="GO:0051156">
    <property type="term" value="P:glucose 6-phosphate metabolic process"/>
    <property type="evidence" value="ECO:0007669"/>
    <property type="project" value="TreeGrafter"/>
</dbReference>
<dbReference type="GO" id="GO:0006096">
    <property type="term" value="P:glycolytic process"/>
    <property type="evidence" value="ECO:0007669"/>
    <property type="project" value="UniProtKB-UniRule"/>
</dbReference>
<dbReference type="CDD" id="cd05015">
    <property type="entry name" value="SIS_PGI_1"/>
    <property type="match status" value="1"/>
</dbReference>
<dbReference type="CDD" id="cd05016">
    <property type="entry name" value="SIS_PGI_2"/>
    <property type="match status" value="1"/>
</dbReference>
<dbReference type="Gene3D" id="1.10.1390.10">
    <property type="match status" value="1"/>
</dbReference>
<dbReference type="Gene3D" id="3.40.50.10490">
    <property type="entry name" value="Glucose-6-phosphate isomerase like protein, domain 1"/>
    <property type="match status" value="2"/>
</dbReference>
<dbReference type="HAMAP" id="MF_00473">
    <property type="entry name" value="G6P_isomerase"/>
    <property type="match status" value="1"/>
</dbReference>
<dbReference type="InterPro" id="IPR001672">
    <property type="entry name" value="G6P_Isomerase"/>
</dbReference>
<dbReference type="InterPro" id="IPR023096">
    <property type="entry name" value="G6P_Isomerase_C"/>
</dbReference>
<dbReference type="InterPro" id="IPR018189">
    <property type="entry name" value="Phosphoglucose_isomerase_CS"/>
</dbReference>
<dbReference type="InterPro" id="IPR046348">
    <property type="entry name" value="SIS_dom_sf"/>
</dbReference>
<dbReference type="InterPro" id="IPR035476">
    <property type="entry name" value="SIS_PGI_1"/>
</dbReference>
<dbReference type="InterPro" id="IPR035482">
    <property type="entry name" value="SIS_PGI_2"/>
</dbReference>
<dbReference type="NCBIfam" id="NF001211">
    <property type="entry name" value="PRK00179.1"/>
    <property type="match status" value="1"/>
</dbReference>
<dbReference type="PANTHER" id="PTHR11469">
    <property type="entry name" value="GLUCOSE-6-PHOSPHATE ISOMERASE"/>
    <property type="match status" value="1"/>
</dbReference>
<dbReference type="PANTHER" id="PTHR11469:SF1">
    <property type="entry name" value="GLUCOSE-6-PHOSPHATE ISOMERASE"/>
    <property type="match status" value="1"/>
</dbReference>
<dbReference type="Pfam" id="PF00342">
    <property type="entry name" value="PGI"/>
    <property type="match status" value="1"/>
</dbReference>
<dbReference type="PRINTS" id="PR00662">
    <property type="entry name" value="G6PISOMERASE"/>
</dbReference>
<dbReference type="SUPFAM" id="SSF53697">
    <property type="entry name" value="SIS domain"/>
    <property type="match status" value="1"/>
</dbReference>
<dbReference type="PROSITE" id="PS00765">
    <property type="entry name" value="P_GLUCOSE_ISOMERASE_1"/>
    <property type="match status" value="1"/>
</dbReference>
<dbReference type="PROSITE" id="PS00174">
    <property type="entry name" value="P_GLUCOSE_ISOMERASE_2"/>
    <property type="match status" value="1"/>
</dbReference>
<dbReference type="PROSITE" id="PS51463">
    <property type="entry name" value="P_GLUCOSE_ISOMERASE_3"/>
    <property type="match status" value="1"/>
</dbReference>
<name>G6PI_ROSDO</name>
<organism>
    <name type="scientific">Roseobacter denitrificans (strain ATCC 33942 / OCh 114)</name>
    <name type="common">Erythrobacter sp. (strain OCh 114)</name>
    <name type="synonym">Roseobacter denitrificans</name>
    <dbReference type="NCBI Taxonomy" id="375451"/>
    <lineage>
        <taxon>Bacteria</taxon>
        <taxon>Pseudomonadati</taxon>
        <taxon>Pseudomonadota</taxon>
        <taxon>Alphaproteobacteria</taxon>
        <taxon>Rhodobacterales</taxon>
        <taxon>Roseobacteraceae</taxon>
        <taxon>Roseobacter</taxon>
    </lineage>
</organism>